<gene>
    <name evidence="1" type="primary">lysS</name>
    <name type="ordered locus">MMOB0440</name>
</gene>
<proteinExistence type="inferred from homology"/>
<keyword id="KW-0030">Aminoacyl-tRNA synthetase</keyword>
<keyword id="KW-0067">ATP-binding</keyword>
<keyword id="KW-0963">Cytoplasm</keyword>
<keyword id="KW-0436">Ligase</keyword>
<keyword id="KW-0460">Magnesium</keyword>
<keyword id="KW-0479">Metal-binding</keyword>
<keyword id="KW-0547">Nucleotide-binding</keyword>
<keyword id="KW-0648">Protein biosynthesis</keyword>
<keyword id="KW-1185">Reference proteome</keyword>
<accession>Q6KIP6</accession>
<evidence type="ECO:0000255" key="1">
    <source>
        <dbReference type="HAMAP-Rule" id="MF_00252"/>
    </source>
</evidence>
<protein>
    <recommendedName>
        <fullName evidence="1">Lysine--tRNA ligase</fullName>
        <ecNumber evidence="1">6.1.1.6</ecNumber>
    </recommendedName>
    <alternativeName>
        <fullName evidence="1">Lysyl-tRNA synthetase</fullName>
        <shortName evidence="1">LysRS</shortName>
    </alternativeName>
</protein>
<reference key="1">
    <citation type="journal article" date="2004" name="Genome Res.">
        <title>The complete genome and proteome of Mycoplasma mobile.</title>
        <authorList>
            <person name="Jaffe J.D."/>
            <person name="Stange-Thomann N."/>
            <person name="Smith C."/>
            <person name="DeCaprio D."/>
            <person name="Fisher S."/>
            <person name="Butler J."/>
            <person name="Calvo S."/>
            <person name="Elkins T."/>
            <person name="FitzGerald M.G."/>
            <person name="Hafez N."/>
            <person name="Kodira C.D."/>
            <person name="Major J."/>
            <person name="Wang S."/>
            <person name="Wilkinson J."/>
            <person name="Nicol R."/>
            <person name="Nusbaum C."/>
            <person name="Birren B."/>
            <person name="Berg H.C."/>
            <person name="Church G.M."/>
        </authorList>
    </citation>
    <scope>NUCLEOTIDE SEQUENCE [LARGE SCALE GENOMIC DNA]</scope>
    <source>
        <strain>ATCC 43663 / NCTC 11711 / 163 K</strain>
    </source>
</reference>
<organism>
    <name type="scientific">Mycoplasma mobile (strain ATCC 43663 / 163K / NCTC 11711)</name>
    <name type="common">Mesomycoplasma mobile</name>
    <dbReference type="NCBI Taxonomy" id="267748"/>
    <lineage>
        <taxon>Bacteria</taxon>
        <taxon>Bacillati</taxon>
        <taxon>Mycoplasmatota</taxon>
        <taxon>Mycoplasmoidales</taxon>
        <taxon>Metamycoplasmataceae</taxon>
        <taxon>Mesomycoplasma</taxon>
    </lineage>
</organism>
<comment type="catalytic activity">
    <reaction evidence="1">
        <text>tRNA(Lys) + L-lysine + ATP = L-lysyl-tRNA(Lys) + AMP + diphosphate</text>
        <dbReference type="Rhea" id="RHEA:20792"/>
        <dbReference type="Rhea" id="RHEA-COMP:9696"/>
        <dbReference type="Rhea" id="RHEA-COMP:9697"/>
        <dbReference type="ChEBI" id="CHEBI:30616"/>
        <dbReference type="ChEBI" id="CHEBI:32551"/>
        <dbReference type="ChEBI" id="CHEBI:33019"/>
        <dbReference type="ChEBI" id="CHEBI:78442"/>
        <dbReference type="ChEBI" id="CHEBI:78529"/>
        <dbReference type="ChEBI" id="CHEBI:456215"/>
        <dbReference type="EC" id="6.1.1.6"/>
    </reaction>
</comment>
<comment type="cofactor">
    <cofactor evidence="1">
        <name>Mg(2+)</name>
        <dbReference type="ChEBI" id="CHEBI:18420"/>
    </cofactor>
    <text evidence="1">Binds 3 Mg(2+) ions per subunit.</text>
</comment>
<comment type="subunit">
    <text evidence="1">Homodimer.</text>
</comment>
<comment type="subcellular location">
    <subcellularLocation>
        <location evidence="1">Cytoplasm</location>
    </subcellularLocation>
</comment>
<comment type="similarity">
    <text evidence="1">Belongs to the class-II aminoacyl-tRNA synthetase family.</text>
</comment>
<name>SYK_MYCM1</name>
<dbReference type="EC" id="6.1.1.6" evidence="1"/>
<dbReference type="EMBL" id="AE017308">
    <property type="protein sequence ID" value="AAT27530.1"/>
    <property type="molecule type" value="Genomic_DNA"/>
</dbReference>
<dbReference type="RefSeq" id="WP_011264564.1">
    <property type="nucleotide sequence ID" value="NC_006908.1"/>
</dbReference>
<dbReference type="SMR" id="Q6KIP6"/>
<dbReference type="STRING" id="267748.MMOB0440"/>
<dbReference type="KEGG" id="mmo:MMOB0440"/>
<dbReference type="eggNOG" id="COG1190">
    <property type="taxonomic scope" value="Bacteria"/>
</dbReference>
<dbReference type="HOGENOM" id="CLU_008255_6_0_14"/>
<dbReference type="OrthoDB" id="9801152at2"/>
<dbReference type="Proteomes" id="UP000009072">
    <property type="component" value="Chromosome"/>
</dbReference>
<dbReference type="GO" id="GO:0005829">
    <property type="term" value="C:cytosol"/>
    <property type="evidence" value="ECO:0007669"/>
    <property type="project" value="TreeGrafter"/>
</dbReference>
<dbReference type="GO" id="GO:0005524">
    <property type="term" value="F:ATP binding"/>
    <property type="evidence" value="ECO:0007669"/>
    <property type="project" value="UniProtKB-UniRule"/>
</dbReference>
<dbReference type="GO" id="GO:0004824">
    <property type="term" value="F:lysine-tRNA ligase activity"/>
    <property type="evidence" value="ECO:0007669"/>
    <property type="project" value="UniProtKB-UniRule"/>
</dbReference>
<dbReference type="GO" id="GO:0000287">
    <property type="term" value="F:magnesium ion binding"/>
    <property type="evidence" value="ECO:0007669"/>
    <property type="project" value="UniProtKB-UniRule"/>
</dbReference>
<dbReference type="GO" id="GO:0000049">
    <property type="term" value="F:tRNA binding"/>
    <property type="evidence" value="ECO:0007669"/>
    <property type="project" value="TreeGrafter"/>
</dbReference>
<dbReference type="GO" id="GO:0006430">
    <property type="term" value="P:lysyl-tRNA aminoacylation"/>
    <property type="evidence" value="ECO:0007669"/>
    <property type="project" value="UniProtKB-UniRule"/>
</dbReference>
<dbReference type="CDD" id="cd00775">
    <property type="entry name" value="LysRS_core"/>
    <property type="match status" value="1"/>
</dbReference>
<dbReference type="CDD" id="cd04322">
    <property type="entry name" value="LysRS_N"/>
    <property type="match status" value="1"/>
</dbReference>
<dbReference type="Gene3D" id="3.30.930.10">
    <property type="entry name" value="Bira Bifunctional Protein, Domain 2"/>
    <property type="match status" value="1"/>
</dbReference>
<dbReference type="Gene3D" id="2.40.50.140">
    <property type="entry name" value="Nucleic acid-binding proteins"/>
    <property type="match status" value="1"/>
</dbReference>
<dbReference type="HAMAP" id="MF_00252">
    <property type="entry name" value="Lys_tRNA_synth_class2"/>
    <property type="match status" value="1"/>
</dbReference>
<dbReference type="InterPro" id="IPR004364">
    <property type="entry name" value="Aa-tRNA-synt_II"/>
</dbReference>
<dbReference type="InterPro" id="IPR006195">
    <property type="entry name" value="aa-tRNA-synth_II"/>
</dbReference>
<dbReference type="InterPro" id="IPR045864">
    <property type="entry name" value="aa-tRNA-synth_II/BPL/LPL"/>
</dbReference>
<dbReference type="InterPro" id="IPR002313">
    <property type="entry name" value="Lys-tRNA-ligase_II"/>
</dbReference>
<dbReference type="InterPro" id="IPR044136">
    <property type="entry name" value="Lys-tRNA-ligase_II_N"/>
</dbReference>
<dbReference type="InterPro" id="IPR018149">
    <property type="entry name" value="Lys-tRNA-synth_II_C"/>
</dbReference>
<dbReference type="InterPro" id="IPR012340">
    <property type="entry name" value="NA-bd_OB-fold"/>
</dbReference>
<dbReference type="InterPro" id="IPR004365">
    <property type="entry name" value="NA-bd_OB_tRNA"/>
</dbReference>
<dbReference type="NCBIfam" id="TIGR00499">
    <property type="entry name" value="lysS_bact"/>
    <property type="match status" value="1"/>
</dbReference>
<dbReference type="NCBIfam" id="NF001756">
    <property type="entry name" value="PRK00484.1"/>
    <property type="match status" value="1"/>
</dbReference>
<dbReference type="PANTHER" id="PTHR42918:SF15">
    <property type="entry name" value="LYSINE--TRNA LIGASE, CHLOROPLASTIC_MITOCHONDRIAL"/>
    <property type="match status" value="1"/>
</dbReference>
<dbReference type="PANTHER" id="PTHR42918">
    <property type="entry name" value="LYSYL-TRNA SYNTHETASE"/>
    <property type="match status" value="1"/>
</dbReference>
<dbReference type="Pfam" id="PF00152">
    <property type="entry name" value="tRNA-synt_2"/>
    <property type="match status" value="1"/>
</dbReference>
<dbReference type="Pfam" id="PF01336">
    <property type="entry name" value="tRNA_anti-codon"/>
    <property type="match status" value="1"/>
</dbReference>
<dbReference type="PRINTS" id="PR00982">
    <property type="entry name" value="TRNASYNTHLYS"/>
</dbReference>
<dbReference type="SUPFAM" id="SSF55681">
    <property type="entry name" value="Class II aaRS and biotin synthetases"/>
    <property type="match status" value="1"/>
</dbReference>
<dbReference type="SUPFAM" id="SSF50249">
    <property type="entry name" value="Nucleic acid-binding proteins"/>
    <property type="match status" value="1"/>
</dbReference>
<dbReference type="PROSITE" id="PS50862">
    <property type="entry name" value="AA_TRNA_LIGASE_II"/>
    <property type="match status" value="1"/>
</dbReference>
<sequence>MNQKLSEQELIRRQKIEKLQKLGVEVFHETVKFDLNINKIIQKYNSFSKDELAKDEFSLSTTGRIITIRSSFLVLKSQGSKFQIYLPIKELDKKYLELIDLLDIGDIIFVNGKLMKTQTGELTLRANELKLLSKSLKVLPDKFHGLNDIEERYRHRYVDLIVNDDVRKTFLLRSRIISLIRKYFDNLEYLEVDTPVLQPILGGASAKPFITKFNALNSNFYLRIATELPLKKLVVGGFDRVYEIGRIFRNEGVDTTHNPEFTSIEYYEAYSNNEGMMNRTEDLFKFIAKELNLKTIFFNGYEIDLNKPFRRLNMVEALNEKLGIDLYKISFEDAKVLAKKHHIKVESYFKIGHIINELFELFIEKDLIQPTFVYGHPIEISPLANKNKKNPNFTDRAELFIGTKEYANMFTELTDPIDQLERFKDQQNEKDNGNEEANEIDYDFVEALEYGLPPTGGCGIGIDRLVMLFTNNESIREVLLFPHLKNK</sequence>
<feature type="chain" id="PRO_1000199244" description="Lysine--tRNA ligase">
    <location>
        <begin position="1"/>
        <end position="487"/>
    </location>
</feature>
<feature type="binding site" evidence="1">
    <location>
        <position position="398"/>
    </location>
    <ligand>
        <name>Mg(2+)</name>
        <dbReference type="ChEBI" id="CHEBI:18420"/>
        <label>1</label>
    </ligand>
</feature>
<feature type="binding site" evidence="1">
    <location>
        <position position="405"/>
    </location>
    <ligand>
        <name>Mg(2+)</name>
        <dbReference type="ChEBI" id="CHEBI:18420"/>
        <label>1</label>
    </ligand>
</feature>
<feature type="binding site" evidence="1">
    <location>
        <position position="405"/>
    </location>
    <ligand>
        <name>Mg(2+)</name>
        <dbReference type="ChEBI" id="CHEBI:18420"/>
        <label>2</label>
    </ligand>
</feature>